<gene>
    <name type="primary">Psmc2</name>
    <name type="synonym">Mss1</name>
</gene>
<proteinExistence type="evidence at protein level"/>
<name>PRS7_RAT</name>
<sequence length="433" mass="48575">MPDYLGADQRKTKEDEKDDKPIRALDEGDIALLKTYGQSTYSRQIKQVEDDIQQLLKKINELTGIKESDTGLAPPALWDLAADKQTLQSEQPLQVARCTKIINADSEDPKYIINVKQFAKFVVDLSDQVAPTDIEEGMRVGVDRNKYQIHIPLPPKIDPTVTMMQVEEKPDVTYSDVGGCKEQIEKLREVVETPLLHPERFVNLGIEPPKGVLLFGPPGTGKTLCARAVANRTDACFIPVIGSELVQKYVGEGARMVRELFEMARTKKACLIFFDEIDAIGGARFDDGAGGDNEVQRTMLELINQLDGFDPRGNIKVLMATNRPDTLDPALMRPGRLDRKIEFSLPDLEGRTHIFKIHARSMSVERDIRFELLARLCPNSTGAEIRSVCTEAGMFAIRARRKIATEKDFLEAVNKVIKSYAKFSATPRYMTYN</sequence>
<feature type="chain" id="PRO_0000084711" description="26S proteasome regulatory subunit 7">
    <location>
        <begin position="1"/>
        <end position="433"/>
    </location>
</feature>
<feature type="region of interest" description="Disordered" evidence="3">
    <location>
        <begin position="1"/>
        <end position="22"/>
    </location>
</feature>
<feature type="compositionally biased region" description="Basic and acidic residues" evidence="3">
    <location>
        <begin position="8"/>
        <end position="22"/>
    </location>
</feature>
<feature type="binding site" evidence="2">
    <location>
        <begin position="216"/>
        <end position="223"/>
    </location>
    <ligand>
        <name>ATP</name>
        <dbReference type="ChEBI" id="CHEBI:30616"/>
    </ligand>
</feature>
<feature type="modified residue" description="N6-acetyllysine" evidence="1">
    <location>
        <position position="116"/>
    </location>
</feature>
<feature type="modified residue" description="N6-acetyllysine" evidence="1">
    <location>
        <position position="422"/>
    </location>
</feature>
<feature type="sequence conflict" description="In Ref. 2; AAH61542." evidence="4" ref="2">
    <original>P</original>
    <variation>R</variation>
    <location>
        <position position="239"/>
    </location>
</feature>
<feature type="sequence conflict" description="In Ref. 2; AAH61542." evidence="4" ref="2">
    <original>S</original>
    <variation>A</variation>
    <location>
        <position position="361"/>
    </location>
</feature>
<keyword id="KW-0002">3D-structure</keyword>
<keyword id="KW-0007">Acetylation</keyword>
<keyword id="KW-0067">ATP-binding</keyword>
<keyword id="KW-0963">Cytoplasm</keyword>
<keyword id="KW-0903">Direct protein sequencing</keyword>
<keyword id="KW-0547">Nucleotide-binding</keyword>
<keyword id="KW-0597">Phosphoprotein</keyword>
<keyword id="KW-0647">Proteasome</keyword>
<keyword id="KW-1185">Reference proteome</keyword>
<keyword id="KW-0832">Ubl conjugation</keyword>
<organism>
    <name type="scientific">Rattus norvegicus</name>
    <name type="common">Rat</name>
    <dbReference type="NCBI Taxonomy" id="10116"/>
    <lineage>
        <taxon>Eukaryota</taxon>
        <taxon>Metazoa</taxon>
        <taxon>Chordata</taxon>
        <taxon>Craniata</taxon>
        <taxon>Vertebrata</taxon>
        <taxon>Euteleostomi</taxon>
        <taxon>Mammalia</taxon>
        <taxon>Eutheria</taxon>
        <taxon>Euarchontoglires</taxon>
        <taxon>Glires</taxon>
        <taxon>Rodentia</taxon>
        <taxon>Myomorpha</taxon>
        <taxon>Muroidea</taxon>
        <taxon>Muridae</taxon>
        <taxon>Murinae</taxon>
        <taxon>Rattus</taxon>
    </lineage>
</organism>
<protein>
    <recommendedName>
        <fullName>26S proteasome regulatory subunit 7</fullName>
    </recommendedName>
    <alternativeName>
        <fullName>26S proteasome AAA-ATPase subunit RPT1</fullName>
    </alternativeName>
    <alternativeName>
        <fullName>Proteasome 26S subunit ATPase 2</fullName>
    </alternativeName>
</protein>
<reference key="1">
    <citation type="journal article" date="1996" name="Biochem. Biophys. Res. Commun.">
        <title>Structures of the rat proteasomal ATPases: determination of highly conserved structural motifs and rules for their spacing.</title>
        <authorList>
            <person name="Makino Y."/>
            <person name="Yogosawa S."/>
            <person name="Kanemaki M."/>
            <person name="Yoshida T."/>
            <person name="Yamano K."/>
            <person name="Kishimoto T."/>
            <person name="Moncollin V."/>
            <person name="Egly J.-M."/>
            <person name="Muramatsu M."/>
            <person name="Tamura T."/>
        </authorList>
    </citation>
    <scope>NUCLEOTIDE SEQUENCE [MRNA]</scope>
    <source>
        <strain>Sprague-Dawley</strain>
        <tissue>Liver</tissue>
    </source>
</reference>
<reference key="2">
    <citation type="journal article" date="2004" name="Genome Res.">
        <title>The status, quality, and expansion of the NIH full-length cDNA project: the Mammalian Gene Collection (MGC).</title>
        <authorList>
            <consortium name="The MGC Project Team"/>
        </authorList>
    </citation>
    <scope>NUCLEOTIDE SEQUENCE [LARGE SCALE MRNA]</scope>
    <source>
        <tissue>Pituitary</tissue>
    </source>
</reference>
<reference key="3">
    <citation type="journal article" date="1998" name="Exp. Eye Res.">
        <title>Gene expression of the proteasome in rat lens development.</title>
        <authorList>
            <person name="Cai H."/>
            <person name="Singh I."/>
            <person name="Wagner B.J."/>
        </authorList>
    </citation>
    <scope>NUCLEOTIDE SEQUENCE [MRNA] OF 14-155</scope>
    <source>
        <strain>Sprague-Dawley</strain>
        <tissue>Lens</tissue>
    </source>
</reference>
<reference key="4">
    <citation type="submission" date="2007-04" db="UniProtKB">
        <authorList>
            <person name="Lubec G."/>
            <person name="Afjehi-Sadat L."/>
            <person name="Chen W.-Q."/>
        </authorList>
    </citation>
    <scope>PROTEIN SEQUENCE OF 147-156; 269-284 AND 340-351</scope>
    <scope>IDENTIFICATION BY MASS SPECTROMETRY</scope>
    <source>
        <strain>Sprague-Dawley</strain>
        <tissue>Hippocampus</tissue>
        <tissue>Spinal cord</tissue>
    </source>
</reference>
<evidence type="ECO:0000250" key="1">
    <source>
        <dbReference type="UniProtKB" id="P35998"/>
    </source>
</evidence>
<evidence type="ECO:0000255" key="2"/>
<evidence type="ECO:0000256" key="3">
    <source>
        <dbReference type="SAM" id="MobiDB-lite"/>
    </source>
</evidence>
<evidence type="ECO:0000305" key="4"/>
<accession>Q63347</accession>
<accession>Q62690</accession>
<accession>Q6P7R9</accession>
<comment type="function">
    <text evidence="1">Component of the 26S proteasome, a multiprotein complex involved in the ATP-dependent degradation of ubiquitinated proteins. This complex plays a key role in the maintenance of protein homeostasis by removing misfolded or damaged proteins, which could impair cellular functions, and by removing proteins whose functions are no longer required. Therefore, the proteasome participates in numerous cellular processes, including cell cycle progression, apoptosis, or DNA damage repair. PSMC2 belongs to the heterohexameric ring of AAA (ATPases associated with diverse cellular activities) proteins that unfolds ubiquitinated target proteins that are concurrently translocated into a proteolytic chamber and degraded into peptides.</text>
</comment>
<comment type="subunit">
    <text evidence="1">Component of the 19S proteasome regulatory particle complex. The 26S proteasome consists of a 20S core particle (CP) and two 19S regulatory subunits (RP). The regulatory particle is made of a lid composed of 9 subunits, a base containing 6 ATPases including PSMC2 and few additional components. Interacts with NDC80 and SQSTM1. Interacts with PAAF1. Interacts with TRIM5.</text>
</comment>
<comment type="subcellular location">
    <subcellularLocation>
        <location evidence="1">Cytoplasm</location>
    </subcellularLocation>
    <text evidence="1">Colocalizes with TRIM5 in cytoplasmic bodies.</text>
</comment>
<comment type="PTM">
    <text evidence="1">Monoubiquitinated by RNF181.</text>
</comment>
<comment type="PTM">
    <text evidence="1">Phosphorylated. Dephosphorylated by UBLCP1 which impairs PSMC2 ATPase activity and disrupts 26S proteasome assembly.</text>
</comment>
<comment type="similarity">
    <text evidence="4">Belongs to the AAA ATPase family.</text>
</comment>
<dbReference type="EMBL" id="D50694">
    <property type="protein sequence ID" value="BAA09339.1"/>
    <property type="molecule type" value="mRNA"/>
</dbReference>
<dbReference type="EMBL" id="BC061542">
    <property type="protein sequence ID" value="AAH61542.1"/>
    <property type="molecule type" value="mRNA"/>
</dbReference>
<dbReference type="EMBL" id="U13895">
    <property type="protein sequence ID" value="AAC53589.2"/>
    <property type="molecule type" value="mRNA"/>
</dbReference>
<dbReference type="RefSeq" id="NP_150239.1">
    <property type="nucleotide sequence ID" value="NM_033236.1"/>
</dbReference>
<dbReference type="PDB" id="6EPC">
    <property type="method" value="EM"/>
    <property type="resolution" value="12.30 A"/>
    <property type="chains" value="H=1-433"/>
</dbReference>
<dbReference type="PDB" id="6EPD">
    <property type="method" value="EM"/>
    <property type="resolution" value="15.40 A"/>
    <property type="chains" value="H=1-433"/>
</dbReference>
<dbReference type="PDB" id="6EPE">
    <property type="method" value="EM"/>
    <property type="resolution" value="12.80 A"/>
    <property type="chains" value="H=1-433"/>
</dbReference>
<dbReference type="PDB" id="6EPF">
    <property type="method" value="EM"/>
    <property type="resolution" value="11.80 A"/>
    <property type="chains" value="H=1-433"/>
</dbReference>
<dbReference type="PDBsum" id="6EPC"/>
<dbReference type="PDBsum" id="6EPD"/>
<dbReference type="PDBsum" id="6EPE"/>
<dbReference type="PDBsum" id="6EPF"/>
<dbReference type="EMDB" id="EMD-3913"/>
<dbReference type="EMDB" id="EMD-3914"/>
<dbReference type="EMDB" id="EMD-3915"/>
<dbReference type="EMDB" id="EMD-3916"/>
<dbReference type="SMR" id="Q63347"/>
<dbReference type="BioGRID" id="247611">
    <property type="interactions" value="9"/>
</dbReference>
<dbReference type="ComplexPortal" id="CPX-8962">
    <property type="entry name" value="19S proteasome regulatory complex"/>
</dbReference>
<dbReference type="ComplexPortal" id="CPX-8965">
    <property type="entry name" value="30S proteasome complex"/>
</dbReference>
<dbReference type="FunCoup" id="Q63347">
    <property type="interactions" value="3123"/>
</dbReference>
<dbReference type="IntAct" id="Q63347">
    <property type="interactions" value="5"/>
</dbReference>
<dbReference type="STRING" id="10116.ENSRNOP00000016450"/>
<dbReference type="iPTMnet" id="Q63347"/>
<dbReference type="PhosphoSitePlus" id="Q63347"/>
<dbReference type="jPOST" id="Q63347"/>
<dbReference type="PaxDb" id="10116-ENSRNOP00000016450"/>
<dbReference type="GeneID" id="25581"/>
<dbReference type="KEGG" id="rno:25581"/>
<dbReference type="AGR" id="RGD:3428"/>
<dbReference type="CTD" id="5701"/>
<dbReference type="RGD" id="3428">
    <property type="gene designation" value="Psmc2"/>
</dbReference>
<dbReference type="eggNOG" id="KOG0729">
    <property type="taxonomic scope" value="Eukaryota"/>
</dbReference>
<dbReference type="InParanoid" id="Q63347"/>
<dbReference type="PhylomeDB" id="Q63347"/>
<dbReference type="Reactome" id="R-RNO-1169091">
    <property type="pathway name" value="Activation of NF-kappaB in B cells"/>
</dbReference>
<dbReference type="Reactome" id="R-RNO-1234176">
    <property type="pathway name" value="Oxygen-dependent proline hydroxylation of Hypoxia-inducible Factor Alpha"/>
</dbReference>
<dbReference type="Reactome" id="R-RNO-1236978">
    <property type="pathway name" value="Cross-presentation of soluble exogenous antigens (endosomes)"/>
</dbReference>
<dbReference type="Reactome" id="R-RNO-174084">
    <property type="pathway name" value="Autodegradation of Cdh1 by Cdh1:APC/C"/>
</dbReference>
<dbReference type="Reactome" id="R-RNO-174113">
    <property type="pathway name" value="SCF-beta-TrCP mediated degradation of Emi1"/>
</dbReference>
<dbReference type="Reactome" id="R-RNO-174154">
    <property type="pathway name" value="APC/C:Cdc20 mediated degradation of Securin"/>
</dbReference>
<dbReference type="Reactome" id="R-RNO-174178">
    <property type="pathway name" value="APC/C:Cdh1 mediated degradation of Cdc20 and other APC/C:Cdh1 targeted proteins in late mitosis/early G1"/>
</dbReference>
<dbReference type="Reactome" id="R-RNO-174184">
    <property type="pathway name" value="Cdc20:Phospho-APC/C mediated degradation of Cyclin A"/>
</dbReference>
<dbReference type="Reactome" id="R-RNO-187577">
    <property type="pathway name" value="SCF(Skp2)-mediated degradation of p27/p21"/>
</dbReference>
<dbReference type="Reactome" id="R-RNO-195253">
    <property type="pathway name" value="Degradation of beta-catenin by the destruction complex"/>
</dbReference>
<dbReference type="Reactome" id="R-RNO-2467813">
    <property type="pathway name" value="Separation of Sister Chromatids"/>
</dbReference>
<dbReference type="Reactome" id="R-RNO-349425">
    <property type="pathway name" value="Autodegradation of the E3 ubiquitin ligase COP1"/>
</dbReference>
<dbReference type="Reactome" id="R-RNO-350562">
    <property type="pathway name" value="Regulation of ornithine decarboxylase (ODC)"/>
</dbReference>
<dbReference type="Reactome" id="R-RNO-382556">
    <property type="pathway name" value="ABC-family proteins mediated transport"/>
</dbReference>
<dbReference type="Reactome" id="R-RNO-450408">
    <property type="pathway name" value="AUF1 (hnRNP D0) binds and destabilizes mRNA"/>
</dbReference>
<dbReference type="Reactome" id="R-RNO-4608870">
    <property type="pathway name" value="Asymmetric localization of PCP proteins"/>
</dbReference>
<dbReference type="Reactome" id="R-RNO-4641257">
    <property type="pathway name" value="Degradation of AXIN"/>
</dbReference>
<dbReference type="Reactome" id="R-RNO-4641258">
    <property type="pathway name" value="Degradation of DVL"/>
</dbReference>
<dbReference type="Reactome" id="R-RNO-5358346">
    <property type="pathway name" value="Hedgehog ligand biogenesis"/>
</dbReference>
<dbReference type="Reactome" id="R-RNO-5607761">
    <property type="pathway name" value="Dectin-1 mediated noncanonical NF-kB signaling"/>
</dbReference>
<dbReference type="Reactome" id="R-RNO-5610780">
    <property type="pathway name" value="Degradation of GLI1 by the proteasome"/>
</dbReference>
<dbReference type="Reactome" id="R-RNO-5610785">
    <property type="pathway name" value="GLI3 is processed to GLI3R by the proteasome"/>
</dbReference>
<dbReference type="Reactome" id="R-RNO-5632684">
    <property type="pathway name" value="Hedgehog 'on' state"/>
</dbReference>
<dbReference type="Reactome" id="R-RNO-5658442">
    <property type="pathway name" value="Regulation of RAS by GAPs"/>
</dbReference>
<dbReference type="Reactome" id="R-RNO-5668541">
    <property type="pathway name" value="TNFR2 non-canonical NF-kB pathway"/>
</dbReference>
<dbReference type="Reactome" id="R-RNO-5676590">
    <property type="pathway name" value="NIK--&gt;noncanonical NF-kB signaling"/>
</dbReference>
<dbReference type="Reactome" id="R-RNO-5687128">
    <property type="pathway name" value="MAPK6/MAPK4 signaling"/>
</dbReference>
<dbReference type="Reactome" id="R-RNO-5689603">
    <property type="pathway name" value="UCH proteinases"/>
</dbReference>
<dbReference type="Reactome" id="R-RNO-5689880">
    <property type="pathway name" value="Ub-specific processing proteases"/>
</dbReference>
<dbReference type="Reactome" id="R-RNO-6798695">
    <property type="pathway name" value="Neutrophil degranulation"/>
</dbReference>
<dbReference type="Reactome" id="R-RNO-68867">
    <property type="pathway name" value="Assembly of the pre-replicative complex"/>
</dbReference>
<dbReference type="Reactome" id="R-RNO-68949">
    <property type="pathway name" value="Orc1 removal from chromatin"/>
</dbReference>
<dbReference type="Reactome" id="R-RNO-69017">
    <property type="pathway name" value="CDK-mediated phosphorylation and removal of Cdc6"/>
</dbReference>
<dbReference type="Reactome" id="R-RNO-69481">
    <property type="pathway name" value="G2/M Checkpoints"/>
</dbReference>
<dbReference type="Reactome" id="R-RNO-69601">
    <property type="pathway name" value="Ubiquitin Mediated Degradation of Phosphorylated Cdc25A"/>
</dbReference>
<dbReference type="Reactome" id="R-RNO-75815">
    <property type="pathway name" value="Ubiquitin-dependent degradation of Cyclin D"/>
</dbReference>
<dbReference type="Reactome" id="R-RNO-8852276">
    <property type="pathway name" value="The role of GTSE1 in G2/M progression after G2 checkpoint"/>
</dbReference>
<dbReference type="Reactome" id="R-RNO-8854050">
    <property type="pathway name" value="FBXL7 down-regulates AURKA during mitotic entry and in early mitosis"/>
</dbReference>
<dbReference type="Reactome" id="R-RNO-8939236">
    <property type="pathway name" value="RUNX1 regulates transcription of genes involved in differentiation of HSCs"/>
</dbReference>
<dbReference type="Reactome" id="R-RNO-8941858">
    <property type="pathway name" value="Regulation of RUNX3 expression and activity"/>
</dbReference>
<dbReference type="Reactome" id="R-RNO-8948751">
    <property type="pathway name" value="Regulation of PTEN stability and activity"/>
</dbReference>
<dbReference type="Reactome" id="R-RNO-8951664">
    <property type="pathway name" value="Neddylation"/>
</dbReference>
<dbReference type="Reactome" id="R-RNO-9755511">
    <property type="pathway name" value="KEAP1-NFE2L2 pathway"/>
</dbReference>
<dbReference type="Reactome" id="R-RNO-9762114">
    <property type="pathway name" value="GSK3B and BTRC:CUL1-mediated-degradation of NFE2L2"/>
</dbReference>
<dbReference type="Reactome" id="R-RNO-983168">
    <property type="pathway name" value="Antigen processing: Ubiquitination &amp; Proteasome degradation"/>
</dbReference>
<dbReference type="Reactome" id="R-RNO-9907900">
    <property type="pathway name" value="Proteasome assembly"/>
</dbReference>
<dbReference type="PRO" id="PR:Q63347"/>
<dbReference type="Proteomes" id="UP000002494">
    <property type="component" value="Unplaced"/>
</dbReference>
<dbReference type="GO" id="GO:0000932">
    <property type="term" value="C:P-body"/>
    <property type="evidence" value="ECO:0000250"/>
    <property type="project" value="UniProtKB"/>
</dbReference>
<dbReference type="GO" id="GO:0022624">
    <property type="term" value="C:proteasome accessory complex"/>
    <property type="evidence" value="ECO:0000250"/>
    <property type="project" value="UniProtKB"/>
</dbReference>
<dbReference type="GO" id="GO:0000502">
    <property type="term" value="C:proteasome complex"/>
    <property type="evidence" value="ECO:0000266"/>
    <property type="project" value="RGD"/>
</dbReference>
<dbReference type="GO" id="GO:0008540">
    <property type="term" value="C:proteasome regulatory particle, base subcomplex"/>
    <property type="evidence" value="ECO:0000318"/>
    <property type="project" value="GO_Central"/>
</dbReference>
<dbReference type="GO" id="GO:0005524">
    <property type="term" value="F:ATP binding"/>
    <property type="evidence" value="ECO:0007669"/>
    <property type="project" value="UniProtKB-KW"/>
</dbReference>
<dbReference type="GO" id="GO:0016887">
    <property type="term" value="F:ATP hydrolysis activity"/>
    <property type="evidence" value="ECO:0007669"/>
    <property type="project" value="InterPro"/>
</dbReference>
<dbReference type="GO" id="GO:0140296">
    <property type="term" value="F:general transcription initiation factor binding"/>
    <property type="evidence" value="ECO:0000353"/>
    <property type="project" value="RGD"/>
</dbReference>
<dbReference type="GO" id="GO:0036402">
    <property type="term" value="F:proteasome-activating activity"/>
    <property type="evidence" value="ECO:0000266"/>
    <property type="project" value="RGD"/>
</dbReference>
<dbReference type="GO" id="GO:0017025">
    <property type="term" value="F:TBP-class protein binding"/>
    <property type="evidence" value="ECO:0000353"/>
    <property type="project" value="RGD"/>
</dbReference>
<dbReference type="GO" id="GO:0043161">
    <property type="term" value="P:proteasome-mediated ubiquitin-dependent protein catabolic process"/>
    <property type="evidence" value="ECO:0000318"/>
    <property type="project" value="GO_Central"/>
</dbReference>
<dbReference type="GO" id="GO:0006511">
    <property type="term" value="P:ubiquitin-dependent protein catabolic process"/>
    <property type="evidence" value="ECO:0000266"/>
    <property type="project" value="RGD"/>
</dbReference>
<dbReference type="CDD" id="cd19502">
    <property type="entry name" value="RecA-like_PAN_like"/>
    <property type="match status" value="1"/>
</dbReference>
<dbReference type="FunFam" id="1.10.8.60:FF:000005">
    <property type="entry name" value="26S protease regulatory subunit 7"/>
    <property type="match status" value="1"/>
</dbReference>
<dbReference type="FunFam" id="2.40.50.140:FF:000075">
    <property type="entry name" value="26S protease regulatory subunit 7"/>
    <property type="match status" value="1"/>
</dbReference>
<dbReference type="FunFam" id="3.40.50.300:FF:000027">
    <property type="entry name" value="26S protease regulatory subunit 7"/>
    <property type="match status" value="1"/>
</dbReference>
<dbReference type="Gene3D" id="1.10.8.60">
    <property type="match status" value="1"/>
</dbReference>
<dbReference type="Gene3D" id="2.40.50.140">
    <property type="entry name" value="Nucleic acid-binding proteins"/>
    <property type="match status" value="1"/>
</dbReference>
<dbReference type="Gene3D" id="3.40.50.300">
    <property type="entry name" value="P-loop containing nucleotide triphosphate hydrolases"/>
    <property type="match status" value="1"/>
</dbReference>
<dbReference type="InterPro" id="IPR050221">
    <property type="entry name" value="26S_Proteasome_ATPase"/>
</dbReference>
<dbReference type="InterPro" id="IPR003593">
    <property type="entry name" value="AAA+_ATPase"/>
</dbReference>
<dbReference type="InterPro" id="IPR041569">
    <property type="entry name" value="AAA_lid_3"/>
</dbReference>
<dbReference type="InterPro" id="IPR003959">
    <property type="entry name" value="ATPase_AAA_core"/>
</dbReference>
<dbReference type="InterPro" id="IPR003960">
    <property type="entry name" value="ATPase_AAA_CS"/>
</dbReference>
<dbReference type="InterPro" id="IPR012340">
    <property type="entry name" value="NA-bd_OB-fold"/>
</dbReference>
<dbReference type="InterPro" id="IPR027417">
    <property type="entry name" value="P-loop_NTPase"/>
</dbReference>
<dbReference type="InterPro" id="IPR048723">
    <property type="entry name" value="PRS7-like_OB"/>
</dbReference>
<dbReference type="PANTHER" id="PTHR23073">
    <property type="entry name" value="26S PROTEASOME REGULATORY SUBUNIT"/>
    <property type="match status" value="1"/>
</dbReference>
<dbReference type="Pfam" id="PF00004">
    <property type="entry name" value="AAA"/>
    <property type="match status" value="1"/>
</dbReference>
<dbReference type="Pfam" id="PF17862">
    <property type="entry name" value="AAA_lid_3"/>
    <property type="match status" value="1"/>
</dbReference>
<dbReference type="Pfam" id="PF21236">
    <property type="entry name" value="PRS7_OB"/>
    <property type="match status" value="1"/>
</dbReference>
<dbReference type="SMART" id="SM00382">
    <property type="entry name" value="AAA"/>
    <property type="match status" value="1"/>
</dbReference>
<dbReference type="SUPFAM" id="SSF52540">
    <property type="entry name" value="P-loop containing nucleoside triphosphate hydrolases"/>
    <property type="match status" value="1"/>
</dbReference>
<dbReference type="PROSITE" id="PS00674">
    <property type="entry name" value="AAA"/>
    <property type="match status" value="1"/>
</dbReference>